<comment type="function">
    <text evidence="1">Photosystem II (PSII) is a light-driven water:plastoquinone oxidoreductase that uses light energy to abstract electrons from H(2)O, generating O(2) and a proton gradient subsequently used for ATP formation. It consists of a core antenna complex that captures photons, and an electron transfer chain that converts photonic excitation into a charge separation. The D1/D2 (PsbA/PsbD) reaction center heterodimer binds P680, the primary electron donor of PSII as well as several subsequent electron acceptors.</text>
</comment>
<comment type="catalytic activity">
    <reaction evidence="1">
        <text>2 a plastoquinone + 4 hnu + 2 H2O = 2 a plastoquinol + O2</text>
        <dbReference type="Rhea" id="RHEA:36359"/>
        <dbReference type="Rhea" id="RHEA-COMP:9561"/>
        <dbReference type="Rhea" id="RHEA-COMP:9562"/>
        <dbReference type="ChEBI" id="CHEBI:15377"/>
        <dbReference type="ChEBI" id="CHEBI:15379"/>
        <dbReference type="ChEBI" id="CHEBI:17757"/>
        <dbReference type="ChEBI" id="CHEBI:30212"/>
        <dbReference type="ChEBI" id="CHEBI:62192"/>
        <dbReference type="EC" id="1.10.3.9"/>
    </reaction>
</comment>
<comment type="cofactor">
    <text evidence="1">The D1/D2 heterodimer binds P680, chlorophylls that are the primary electron donor of PSII, and subsequent electron acceptors. It shares a non-heme iron and each subunit binds pheophytin, quinone, additional chlorophylls, carotenoids and lipids. D1 provides most of the ligands for the Mn4-Ca-O5 cluster of the oxygen-evolving complex (OEC). There is also a Cl(-1) ion associated with D1 and D2, which is required for oxygen evolution. The PSII complex binds additional chlorophylls, carotenoids and specific lipids.</text>
</comment>
<comment type="subunit">
    <text evidence="1">PSII is composed of 1 copy each of membrane proteins PsbA, PsbB, PsbC, PsbD, PsbE, PsbF, PsbH, PsbI, PsbJ, PsbK, PsbL, PsbM, PsbT, PsbX, PsbY, PsbZ, Psb30/Ycf12, at least 3 peripheral proteins of the oxygen-evolving complex and a large number of cofactors. It forms dimeric complexes.</text>
</comment>
<comment type="subcellular location">
    <subcellularLocation>
        <location evidence="1">Plastid</location>
        <location evidence="1">Chloroplast thylakoid membrane</location>
        <topology evidence="1">Multi-pass membrane protein</topology>
    </subcellularLocation>
</comment>
<comment type="PTM">
    <text evidence="1">Tyr-161 forms a radical intermediate that is referred to as redox-active TyrZ, YZ or Y-Z.</text>
</comment>
<comment type="PTM">
    <text evidence="1">C-terminally processed by CTPA; processing is essential to allow assembly of the oxygen-evolving complex and thus photosynthetic growth.</text>
</comment>
<comment type="miscellaneous">
    <text evidence="1">2 of the reaction center chlorophylls (ChlD1 and ChlD2) are entirely coordinated by water.</text>
</comment>
<comment type="miscellaneous">
    <text evidence="1">Herbicides such as atrazine, BNT, diuron or ioxynil bind in the Q(B) binding site and block subsequent electron transfer.</text>
</comment>
<comment type="similarity">
    <text evidence="1">Belongs to the reaction center PufL/M/PsbA/D family.</text>
</comment>
<feature type="initiator methionine" description="Removed" evidence="1">
    <location>
        <position position="1"/>
    </location>
</feature>
<feature type="chain" id="PRO_0000339936" description="Photosystem II protein D1" evidence="1">
    <location>
        <begin position="2"/>
        <end position="344"/>
    </location>
</feature>
<feature type="propeptide" id="PRO_0000339937" evidence="1">
    <location>
        <begin position="345"/>
        <end position="353"/>
    </location>
</feature>
<feature type="transmembrane region" description="Helical" evidence="1">
    <location>
        <begin position="29"/>
        <end position="46"/>
    </location>
</feature>
<feature type="transmembrane region" description="Helical" evidence="1">
    <location>
        <begin position="118"/>
        <end position="133"/>
    </location>
</feature>
<feature type="transmembrane region" description="Helical" evidence="1">
    <location>
        <begin position="142"/>
        <end position="156"/>
    </location>
</feature>
<feature type="transmembrane region" description="Helical" evidence="1">
    <location>
        <begin position="197"/>
        <end position="218"/>
    </location>
</feature>
<feature type="transmembrane region" description="Helical" evidence="1">
    <location>
        <begin position="274"/>
        <end position="288"/>
    </location>
</feature>
<feature type="binding site" description="axial binding residue" evidence="1">
    <location>
        <position position="118"/>
    </location>
    <ligand>
        <name>chlorophyll a</name>
        <dbReference type="ChEBI" id="CHEBI:58416"/>
        <label>ChlzD1</label>
    </ligand>
    <ligandPart>
        <name>Mg</name>
        <dbReference type="ChEBI" id="CHEBI:25107"/>
    </ligandPart>
</feature>
<feature type="binding site" evidence="1">
    <location>
        <position position="126"/>
    </location>
    <ligand>
        <name>pheophytin a</name>
        <dbReference type="ChEBI" id="CHEBI:136840"/>
        <label>D1</label>
    </ligand>
</feature>
<feature type="binding site" evidence="1">
    <location>
        <position position="170"/>
    </location>
    <ligand>
        <name>[CaMn4O5] cluster</name>
        <dbReference type="ChEBI" id="CHEBI:189552"/>
    </ligand>
</feature>
<feature type="binding site" evidence="1">
    <location>
        <position position="189"/>
    </location>
    <ligand>
        <name>[CaMn4O5] cluster</name>
        <dbReference type="ChEBI" id="CHEBI:189552"/>
    </ligand>
</feature>
<feature type="binding site" description="axial binding residue" evidence="1">
    <location>
        <position position="198"/>
    </location>
    <ligand>
        <name>chlorophyll a</name>
        <dbReference type="ChEBI" id="CHEBI:58416"/>
        <label>PD1</label>
    </ligand>
    <ligandPart>
        <name>Mg</name>
        <dbReference type="ChEBI" id="CHEBI:25107"/>
    </ligandPart>
</feature>
<feature type="binding site" evidence="1">
    <location>
        <position position="215"/>
    </location>
    <ligand>
        <name>a quinone</name>
        <dbReference type="ChEBI" id="CHEBI:132124"/>
        <label>B</label>
    </ligand>
</feature>
<feature type="binding site" evidence="1">
    <location>
        <position position="215"/>
    </location>
    <ligand>
        <name>Fe cation</name>
        <dbReference type="ChEBI" id="CHEBI:24875"/>
        <note>ligand shared with heterodimeric partner</note>
    </ligand>
</feature>
<feature type="binding site" evidence="1">
    <location>
        <begin position="264"/>
        <end position="265"/>
    </location>
    <ligand>
        <name>a quinone</name>
        <dbReference type="ChEBI" id="CHEBI:132124"/>
        <label>B</label>
    </ligand>
</feature>
<feature type="binding site" evidence="1">
    <location>
        <position position="272"/>
    </location>
    <ligand>
        <name>Fe cation</name>
        <dbReference type="ChEBI" id="CHEBI:24875"/>
        <note>ligand shared with heterodimeric partner</note>
    </ligand>
</feature>
<feature type="binding site" evidence="1">
    <location>
        <position position="332"/>
    </location>
    <ligand>
        <name>[CaMn4O5] cluster</name>
        <dbReference type="ChEBI" id="CHEBI:189552"/>
    </ligand>
</feature>
<feature type="binding site" evidence="1">
    <location>
        <position position="333"/>
    </location>
    <ligand>
        <name>[CaMn4O5] cluster</name>
        <dbReference type="ChEBI" id="CHEBI:189552"/>
    </ligand>
</feature>
<feature type="binding site" evidence="1">
    <location>
        <position position="342"/>
    </location>
    <ligand>
        <name>[CaMn4O5] cluster</name>
        <dbReference type="ChEBI" id="CHEBI:189552"/>
    </ligand>
</feature>
<feature type="binding site" evidence="1">
    <location>
        <position position="344"/>
    </location>
    <ligand>
        <name>[CaMn4O5] cluster</name>
        <dbReference type="ChEBI" id="CHEBI:189552"/>
    </ligand>
</feature>
<feature type="site" description="Tyrosine radical intermediate" evidence="1">
    <location>
        <position position="161"/>
    </location>
</feature>
<feature type="site" description="Stabilizes free radical intermediate" evidence="1">
    <location>
        <position position="190"/>
    </location>
</feature>
<feature type="site" description="Cleavage; by CTPA" evidence="1">
    <location>
        <begin position="344"/>
        <end position="345"/>
    </location>
</feature>
<feature type="modified residue" description="N-acetylthreonine" evidence="1">
    <location>
        <position position="2"/>
    </location>
</feature>
<feature type="modified residue" description="Phosphothreonine" evidence="1">
    <location>
        <position position="2"/>
    </location>
</feature>
<proteinExistence type="inferred from homology"/>
<dbReference type="EC" id="1.10.3.9" evidence="1"/>
<dbReference type="EMBL" id="AJ879453">
    <property type="protein sequence ID" value="CAI53774.1"/>
    <property type="molecule type" value="Genomic_DNA"/>
</dbReference>
<dbReference type="RefSeq" id="YP_319745.1">
    <property type="nucleotide sequence ID" value="NC_007407.1"/>
</dbReference>
<dbReference type="SMR" id="Q3V554"/>
<dbReference type="GeneID" id="3677462"/>
<dbReference type="GO" id="GO:0009535">
    <property type="term" value="C:chloroplast thylakoid membrane"/>
    <property type="evidence" value="ECO:0007669"/>
    <property type="project" value="UniProtKB-SubCell"/>
</dbReference>
<dbReference type="GO" id="GO:0009523">
    <property type="term" value="C:photosystem II"/>
    <property type="evidence" value="ECO:0007669"/>
    <property type="project" value="UniProtKB-KW"/>
</dbReference>
<dbReference type="GO" id="GO:0016168">
    <property type="term" value="F:chlorophyll binding"/>
    <property type="evidence" value="ECO:0007669"/>
    <property type="project" value="UniProtKB-UniRule"/>
</dbReference>
<dbReference type="GO" id="GO:0045156">
    <property type="term" value="F:electron transporter, transferring electrons within the cyclic electron transport pathway of photosynthesis activity"/>
    <property type="evidence" value="ECO:0007669"/>
    <property type="project" value="InterPro"/>
</dbReference>
<dbReference type="GO" id="GO:0005506">
    <property type="term" value="F:iron ion binding"/>
    <property type="evidence" value="ECO:0007669"/>
    <property type="project" value="UniProtKB-UniRule"/>
</dbReference>
<dbReference type="GO" id="GO:0016682">
    <property type="term" value="F:oxidoreductase activity, acting on diphenols and related substances as donors, oxygen as acceptor"/>
    <property type="evidence" value="ECO:0007669"/>
    <property type="project" value="UniProtKB-UniRule"/>
</dbReference>
<dbReference type="GO" id="GO:0010242">
    <property type="term" value="F:oxygen evolving activity"/>
    <property type="evidence" value="ECO:0007669"/>
    <property type="project" value="UniProtKB-EC"/>
</dbReference>
<dbReference type="GO" id="GO:0009772">
    <property type="term" value="P:photosynthetic electron transport in photosystem II"/>
    <property type="evidence" value="ECO:0007669"/>
    <property type="project" value="InterPro"/>
</dbReference>
<dbReference type="GO" id="GO:0009635">
    <property type="term" value="P:response to herbicide"/>
    <property type="evidence" value="ECO:0007669"/>
    <property type="project" value="UniProtKB-KW"/>
</dbReference>
<dbReference type="CDD" id="cd09289">
    <property type="entry name" value="Photosystem-II_D1"/>
    <property type="match status" value="1"/>
</dbReference>
<dbReference type="FunFam" id="1.20.85.10:FF:000002">
    <property type="entry name" value="Photosystem II protein D1"/>
    <property type="match status" value="1"/>
</dbReference>
<dbReference type="Gene3D" id="1.20.85.10">
    <property type="entry name" value="Photosystem II protein D1-like"/>
    <property type="match status" value="1"/>
</dbReference>
<dbReference type="HAMAP" id="MF_01379">
    <property type="entry name" value="PSII_PsbA_D1"/>
    <property type="match status" value="1"/>
</dbReference>
<dbReference type="InterPro" id="IPR055266">
    <property type="entry name" value="D1/D2"/>
</dbReference>
<dbReference type="InterPro" id="IPR036854">
    <property type="entry name" value="Photo_II_D1/D2_sf"/>
</dbReference>
<dbReference type="InterPro" id="IPR000484">
    <property type="entry name" value="Photo_RC_L/M"/>
</dbReference>
<dbReference type="InterPro" id="IPR055265">
    <property type="entry name" value="Photo_RC_L/M_CS"/>
</dbReference>
<dbReference type="InterPro" id="IPR005867">
    <property type="entry name" value="PSII_D1"/>
</dbReference>
<dbReference type="NCBIfam" id="TIGR01151">
    <property type="entry name" value="psbA"/>
    <property type="match status" value="1"/>
</dbReference>
<dbReference type="PANTHER" id="PTHR33149:SF12">
    <property type="entry name" value="PHOTOSYSTEM II D2 PROTEIN"/>
    <property type="match status" value="1"/>
</dbReference>
<dbReference type="PANTHER" id="PTHR33149">
    <property type="entry name" value="PHOTOSYSTEM II PROTEIN D1"/>
    <property type="match status" value="1"/>
</dbReference>
<dbReference type="Pfam" id="PF00124">
    <property type="entry name" value="Photo_RC"/>
    <property type="match status" value="1"/>
</dbReference>
<dbReference type="PRINTS" id="PR00256">
    <property type="entry name" value="REACTNCENTRE"/>
</dbReference>
<dbReference type="SUPFAM" id="SSF81483">
    <property type="entry name" value="Bacterial photosystem II reaction centre, L and M subunits"/>
    <property type="match status" value="1"/>
</dbReference>
<dbReference type="PROSITE" id="PS00244">
    <property type="entry name" value="REACTION_CENTER"/>
    <property type="match status" value="1"/>
</dbReference>
<name>PSBA_ACOCL</name>
<organism>
    <name type="scientific">Acorus calamus</name>
    <name type="common">Sweet flag</name>
    <dbReference type="NCBI Taxonomy" id="4465"/>
    <lineage>
        <taxon>Eukaryota</taxon>
        <taxon>Viridiplantae</taxon>
        <taxon>Streptophyta</taxon>
        <taxon>Embryophyta</taxon>
        <taxon>Tracheophyta</taxon>
        <taxon>Spermatophyta</taxon>
        <taxon>Magnoliopsida</taxon>
        <taxon>Liliopsida</taxon>
        <taxon>Acoraceae</taxon>
        <taxon>Acorus</taxon>
    </lineage>
</organism>
<accession>Q3V554</accession>
<gene>
    <name evidence="1" type="primary">psbA</name>
</gene>
<geneLocation type="chloroplast"/>
<sequence>MTAILERRESTSLWGRFCNWITSTENRLYIGWFGVLMIPTLLTATSVFIIAFIAAPPVDIDGIREPVSGSLLYGNNIISGAIIPTSAAIGLHFYPIWEAASVDEWLYNGGPYELIVLHFLLGVACYMGREWELSFRLGMRPWIAVAYSAPVAAATAVFLIYPIGQGSFSDGMPLGISGTFNFMIVFQAEHNILMHPFHMLGVAGVFGGSLFSAMHGSLVTSSLIRETTENESANEGYRFGQEEETYNIVAAHGYFGRLIFQYASFNNSRSLHFFLAAWPVVGIWFTALGISTMAFNLNGFNFNQSVVDSQGRVINTWADIINRANLGMEVMHERNAHNFPLDLASVEAPSTNG</sequence>
<protein>
    <recommendedName>
        <fullName evidence="1">Photosystem II protein D1</fullName>
        <shortName evidence="1">PSII D1 protein</shortName>
        <ecNumber evidence="1">1.10.3.9</ecNumber>
    </recommendedName>
    <alternativeName>
        <fullName evidence="1">Photosystem II Q(B) protein</fullName>
    </alternativeName>
</protein>
<evidence type="ECO:0000255" key="1">
    <source>
        <dbReference type="HAMAP-Rule" id="MF_01379"/>
    </source>
</evidence>
<reference key="1">
    <citation type="journal article" date="2005" name="Mol. Biol. Evol.">
        <title>Analysis of Acorus calamus chloroplast genome and its phylogenetic implications.</title>
        <authorList>
            <person name="Goremykin V.V."/>
            <person name="Holland B."/>
            <person name="Hirsch-Ernst K.I."/>
            <person name="Hellwig F.H."/>
        </authorList>
    </citation>
    <scope>NUCLEOTIDE SEQUENCE [LARGE SCALE GENOMIC DNA]</scope>
</reference>
<keyword id="KW-0007">Acetylation</keyword>
<keyword id="KW-0106">Calcium</keyword>
<keyword id="KW-0148">Chlorophyll</keyword>
<keyword id="KW-0150">Chloroplast</keyword>
<keyword id="KW-0157">Chromophore</keyword>
<keyword id="KW-0249">Electron transport</keyword>
<keyword id="KW-0359">Herbicide resistance</keyword>
<keyword id="KW-0408">Iron</keyword>
<keyword id="KW-0460">Magnesium</keyword>
<keyword id="KW-0464">Manganese</keyword>
<keyword id="KW-0472">Membrane</keyword>
<keyword id="KW-0479">Metal-binding</keyword>
<keyword id="KW-0560">Oxidoreductase</keyword>
<keyword id="KW-0597">Phosphoprotein</keyword>
<keyword id="KW-0602">Photosynthesis</keyword>
<keyword id="KW-0604">Photosystem II</keyword>
<keyword id="KW-0934">Plastid</keyword>
<keyword id="KW-0793">Thylakoid</keyword>
<keyword id="KW-0812">Transmembrane</keyword>
<keyword id="KW-1133">Transmembrane helix</keyword>
<keyword id="KW-0813">Transport</keyword>